<feature type="chain" id="PRO_0000382385" description="Glutamate-1-semialdehyde 2,1-aminomutase">
    <location>
        <begin position="1"/>
        <end position="438"/>
    </location>
</feature>
<feature type="modified residue" description="N6-(pyridoxal phosphate)lysine" evidence="1">
    <location>
        <position position="277"/>
    </location>
</feature>
<accession>Q0I8G1</accession>
<proteinExistence type="inferred from homology"/>
<dbReference type="EC" id="5.4.3.8" evidence="1"/>
<dbReference type="EMBL" id="CP000435">
    <property type="protein sequence ID" value="ABI46083.1"/>
    <property type="molecule type" value="Genomic_DNA"/>
</dbReference>
<dbReference type="SMR" id="Q0I8G1"/>
<dbReference type="STRING" id="64471.sync_2058"/>
<dbReference type="KEGG" id="syg:sync_2058"/>
<dbReference type="eggNOG" id="COG0001">
    <property type="taxonomic scope" value="Bacteria"/>
</dbReference>
<dbReference type="HOGENOM" id="CLU_016922_1_5_3"/>
<dbReference type="UniPathway" id="UPA00251">
    <property type="reaction ID" value="UER00317"/>
</dbReference>
<dbReference type="UniPathway" id="UPA00668"/>
<dbReference type="Proteomes" id="UP000001961">
    <property type="component" value="Chromosome"/>
</dbReference>
<dbReference type="GO" id="GO:0005737">
    <property type="term" value="C:cytoplasm"/>
    <property type="evidence" value="ECO:0007669"/>
    <property type="project" value="UniProtKB-SubCell"/>
</dbReference>
<dbReference type="GO" id="GO:0042286">
    <property type="term" value="F:glutamate-1-semialdehyde 2,1-aminomutase activity"/>
    <property type="evidence" value="ECO:0007669"/>
    <property type="project" value="UniProtKB-UniRule"/>
</dbReference>
<dbReference type="GO" id="GO:0030170">
    <property type="term" value="F:pyridoxal phosphate binding"/>
    <property type="evidence" value="ECO:0007669"/>
    <property type="project" value="InterPro"/>
</dbReference>
<dbReference type="GO" id="GO:0008483">
    <property type="term" value="F:transaminase activity"/>
    <property type="evidence" value="ECO:0007669"/>
    <property type="project" value="InterPro"/>
</dbReference>
<dbReference type="GO" id="GO:0015995">
    <property type="term" value="P:chlorophyll biosynthetic process"/>
    <property type="evidence" value="ECO:0007669"/>
    <property type="project" value="UniProtKB-UniRule"/>
</dbReference>
<dbReference type="GO" id="GO:0006782">
    <property type="term" value="P:protoporphyrinogen IX biosynthetic process"/>
    <property type="evidence" value="ECO:0007669"/>
    <property type="project" value="UniProtKB-UniRule"/>
</dbReference>
<dbReference type="CDD" id="cd00610">
    <property type="entry name" value="OAT_like"/>
    <property type="match status" value="1"/>
</dbReference>
<dbReference type="FunFam" id="3.40.640.10:FF:000021">
    <property type="entry name" value="Glutamate-1-semialdehyde 2,1-aminomutase"/>
    <property type="match status" value="1"/>
</dbReference>
<dbReference type="Gene3D" id="3.90.1150.10">
    <property type="entry name" value="Aspartate Aminotransferase, domain 1"/>
    <property type="match status" value="1"/>
</dbReference>
<dbReference type="Gene3D" id="3.40.640.10">
    <property type="entry name" value="Type I PLP-dependent aspartate aminotransferase-like (Major domain)"/>
    <property type="match status" value="1"/>
</dbReference>
<dbReference type="HAMAP" id="MF_00375">
    <property type="entry name" value="HemL_aminotrans_3"/>
    <property type="match status" value="1"/>
</dbReference>
<dbReference type="InterPro" id="IPR004639">
    <property type="entry name" value="4pyrrol_synth_GluAld_NH2Trfase"/>
</dbReference>
<dbReference type="InterPro" id="IPR005814">
    <property type="entry name" value="Aminotrans_3"/>
</dbReference>
<dbReference type="InterPro" id="IPR049704">
    <property type="entry name" value="Aminotrans_3_PPA_site"/>
</dbReference>
<dbReference type="InterPro" id="IPR015424">
    <property type="entry name" value="PyrdxlP-dep_Trfase"/>
</dbReference>
<dbReference type="InterPro" id="IPR015421">
    <property type="entry name" value="PyrdxlP-dep_Trfase_major"/>
</dbReference>
<dbReference type="InterPro" id="IPR015422">
    <property type="entry name" value="PyrdxlP-dep_Trfase_small"/>
</dbReference>
<dbReference type="NCBIfam" id="TIGR00713">
    <property type="entry name" value="hemL"/>
    <property type="match status" value="1"/>
</dbReference>
<dbReference type="NCBIfam" id="NF000818">
    <property type="entry name" value="PRK00062.1"/>
    <property type="match status" value="1"/>
</dbReference>
<dbReference type="PANTHER" id="PTHR43713">
    <property type="entry name" value="GLUTAMATE-1-SEMIALDEHYDE 2,1-AMINOMUTASE"/>
    <property type="match status" value="1"/>
</dbReference>
<dbReference type="PANTHER" id="PTHR43713:SF3">
    <property type="entry name" value="GLUTAMATE-1-SEMIALDEHYDE 2,1-AMINOMUTASE 1, CHLOROPLASTIC-RELATED"/>
    <property type="match status" value="1"/>
</dbReference>
<dbReference type="Pfam" id="PF00202">
    <property type="entry name" value="Aminotran_3"/>
    <property type="match status" value="1"/>
</dbReference>
<dbReference type="SUPFAM" id="SSF53383">
    <property type="entry name" value="PLP-dependent transferases"/>
    <property type="match status" value="1"/>
</dbReference>
<dbReference type="PROSITE" id="PS00600">
    <property type="entry name" value="AA_TRANSFER_CLASS_3"/>
    <property type="match status" value="1"/>
</dbReference>
<protein>
    <recommendedName>
        <fullName evidence="1">Glutamate-1-semialdehyde 2,1-aminomutase</fullName>
        <shortName evidence="1">GSA</shortName>
        <ecNumber evidence="1">5.4.3.8</ecNumber>
    </recommendedName>
    <alternativeName>
        <fullName evidence="1">Glutamate-1-semialdehyde aminotransferase</fullName>
        <shortName evidence="1">GSA-AT</shortName>
    </alternativeName>
</protein>
<sequence>MAPVPVTASNLNTSHSEAIFSAAKALMPGGVSSPVRAFKSVGGQPIVFDRVKGPYAWDVDGNKYVDYIGSWGPAICGHAHPEVISALQEAIEKGTSFGAPCALENTLAEMVIEAVPSVEMVRFVNSGTEACMSMLRLIRAFTGRDKIIKFEGCYHGHADMFLVKAGSGVATLGLPDSPGVPRSTTANTLTAPYNDLESVKQLFAENPDAIAGVILEPIVGNAGFIQPEPGFLEGLRELTKENGALLVFDEVMTGFRISYGGAQAHFGVTPDLTTMGKVIGGGLPVGAYGGRKEIMEMVAPAGPMYQAGTLSGNPLAMTAGIKTLELLKQPGSYEKLTATTERLIQGILDAGREAGLPITGGSVGAMFGFFLCEGPVRNFEEAKATDSVRFGLLHRAMLERGVYLAPSAFEAGFTSLAHSDENIDATIQAFRDSFAAIS</sequence>
<keyword id="KW-0149">Chlorophyll biosynthesis</keyword>
<keyword id="KW-0963">Cytoplasm</keyword>
<keyword id="KW-0413">Isomerase</keyword>
<keyword id="KW-0627">Porphyrin biosynthesis</keyword>
<keyword id="KW-0663">Pyridoxal phosphate</keyword>
<keyword id="KW-1185">Reference proteome</keyword>
<comment type="catalytic activity">
    <reaction evidence="1">
        <text>(S)-4-amino-5-oxopentanoate = 5-aminolevulinate</text>
        <dbReference type="Rhea" id="RHEA:14265"/>
        <dbReference type="ChEBI" id="CHEBI:57501"/>
        <dbReference type="ChEBI" id="CHEBI:356416"/>
        <dbReference type="EC" id="5.4.3.8"/>
    </reaction>
</comment>
<comment type="cofactor">
    <cofactor evidence="1">
        <name>pyridoxal 5'-phosphate</name>
        <dbReference type="ChEBI" id="CHEBI:597326"/>
    </cofactor>
</comment>
<comment type="pathway">
    <text evidence="1">Porphyrin-containing compound metabolism; protoporphyrin-IX biosynthesis; 5-aminolevulinate from L-glutamyl-tRNA(Glu): step 2/2.</text>
</comment>
<comment type="pathway">
    <text evidence="1">Porphyrin-containing compound metabolism; chlorophyll biosynthesis.</text>
</comment>
<comment type="subunit">
    <text evidence="1">Homodimer.</text>
</comment>
<comment type="subcellular location">
    <subcellularLocation>
        <location evidence="1">Cytoplasm</location>
    </subcellularLocation>
</comment>
<comment type="similarity">
    <text evidence="1">Belongs to the class-III pyridoxal-phosphate-dependent aminotransferase family. HemL subfamily.</text>
</comment>
<gene>
    <name evidence="1" type="primary">hemL</name>
    <name type="ordered locus">sync_2058</name>
</gene>
<organism>
    <name type="scientific">Synechococcus sp. (strain CC9311)</name>
    <dbReference type="NCBI Taxonomy" id="64471"/>
    <lineage>
        <taxon>Bacteria</taxon>
        <taxon>Bacillati</taxon>
        <taxon>Cyanobacteriota</taxon>
        <taxon>Cyanophyceae</taxon>
        <taxon>Synechococcales</taxon>
        <taxon>Synechococcaceae</taxon>
        <taxon>Synechococcus</taxon>
    </lineage>
</organism>
<evidence type="ECO:0000255" key="1">
    <source>
        <dbReference type="HAMAP-Rule" id="MF_00375"/>
    </source>
</evidence>
<name>GSA_SYNS3</name>
<reference key="1">
    <citation type="journal article" date="2006" name="Proc. Natl. Acad. Sci. U.S.A.">
        <title>Genome sequence of Synechococcus CC9311: insights into adaptation to a coastal environment.</title>
        <authorList>
            <person name="Palenik B."/>
            <person name="Ren Q."/>
            <person name="Dupont C.L."/>
            <person name="Myers G.S."/>
            <person name="Heidelberg J.F."/>
            <person name="Badger J.H."/>
            <person name="Madupu R."/>
            <person name="Nelson W.C."/>
            <person name="Brinkac L.M."/>
            <person name="Dodson R.J."/>
            <person name="Durkin A.S."/>
            <person name="Daugherty S.C."/>
            <person name="Sullivan S.A."/>
            <person name="Khouri H."/>
            <person name="Mohamoud Y."/>
            <person name="Halpin R."/>
            <person name="Paulsen I.T."/>
        </authorList>
    </citation>
    <scope>NUCLEOTIDE SEQUENCE [LARGE SCALE GENOMIC DNA]</scope>
    <source>
        <strain>CC9311</strain>
    </source>
</reference>